<comment type="function">
    <text evidence="2">Transaldolase is important for the balance of metabolites in the pentose-phosphate pathway.</text>
</comment>
<comment type="catalytic activity">
    <reaction evidence="2">
        <text>D-sedoheptulose 7-phosphate + D-glyceraldehyde 3-phosphate = D-erythrose 4-phosphate + beta-D-fructose 6-phosphate</text>
        <dbReference type="Rhea" id="RHEA:17053"/>
        <dbReference type="ChEBI" id="CHEBI:16897"/>
        <dbReference type="ChEBI" id="CHEBI:57483"/>
        <dbReference type="ChEBI" id="CHEBI:57634"/>
        <dbReference type="ChEBI" id="CHEBI:59776"/>
        <dbReference type="EC" id="2.2.1.2"/>
    </reaction>
</comment>
<comment type="pathway">
    <text evidence="2">Carbohydrate degradation; pentose phosphate pathway; D-glyceraldehyde 3-phosphate and beta-D-fructose 6-phosphate from D-ribose 5-phosphate and D-xylulose 5-phosphate (non-oxidative stage): step 2/3.</text>
</comment>
<comment type="subunit">
    <text evidence="1">Homodimer.</text>
</comment>
<comment type="subcellular location">
    <subcellularLocation>
        <location evidence="2">Cytoplasm</location>
    </subcellularLocation>
</comment>
<comment type="similarity">
    <text evidence="2">Belongs to the transaldolase family. Type 1 subfamily.</text>
</comment>
<name>TAL_PROMP</name>
<feature type="chain" id="PRO_0000173606" description="Transaldolase">
    <location>
        <begin position="1"/>
        <end position="333"/>
    </location>
</feature>
<feature type="active site" description="Schiff-base intermediate with substrate" evidence="2">
    <location>
        <position position="135"/>
    </location>
</feature>
<evidence type="ECO:0000250" key="1"/>
<evidence type="ECO:0000255" key="2">
    <source>
        <dbReference type="HAMAP-Rule" id="MF_00492"/>
    </source>
</evidence>
<accession>Q7V2G1</accession>
<protein>
    <recommendedName>
        <fullName evidence="2">Transaldolase</fullName>
        <ecNumber evidence="2">2.2.1.2</ecNumber>
    </recommendedName>
</protein>
<keyword id="KW-0963">Cytoplasm</keyword>
<keyword id="KW-0570">Pentose shunt</keyword>
<keyword id="KW-0704">Schiff base</keyword>
<keyword id="KW-0808">Transferase</keyword>
<organism>
    <name type="scientific">Prochlorococcus marinus subsp. pastoris (strain CCMP1986 / NIES-2087 / MED4)</name>
    <dbReference type="NCBI Taxonomy" id="59919"/>
    <lineage>
        <taxon>Bacteria</taxon>
        <taxon>Bacillati</taxon>
        <taxon>Cyanobacteriota</taxon>
        <taxon>Cyanophyceae</taxon>
        <taxon>Synechococcales</taxon>
        <taxon>Prochlorococcaceae</taxon>
        <taxon>Prochlorococcus</taxon>
    </lineage>
</organism>
<gene>
    <name evidence="2" type="primary">tal</name>
    <name type="ordered locus">PMM0519</name>
</gene>
<dbReference type="EC" id="2.2.1.2" evidence="2"/>
<dbReference type="EMBL" id="BX548174">
    <property type="protein sequence ID" value="CAE18978.1"/>
    <property type="molecule type" value="Genomic_DNA"/>
</dbReference>
<dbReference type="RefSeq" id="WP_011132154.1">
    <property type="nucleotide sequence ID" value="NC_005072.1"/>
</dbReference>
<dbReference type="SMR" id="Q7V2G1"/>
<dbReference type="STRING" id="59919.PMM0519"/>
<dbReference type="KEGG" id="pmm:PMM0519"/>
<dbReference type="eggNOG" id="COG0176">
    <property type="taxonomic scope" value="Bacteria"/>
</dbReference>
<dbReference type="HOGENOM" id="CLU_047470_0_1_3"/>
<dbReference type="OrthoDB" id="9807051at2"/>
<dbReference type="UniPathway" id="UPA00115">
    <property type="reaction ID" value="UER00414"/>
</dbReference>
<dbReference type="Proteomes" id="UP000001026">
    <property type="component" value="Chromosome"/>
</dbReference>
<dbReference type="GO" id="GO:0005737">
    <property type="term" value="C:cytoplasm"/>
    <property type="evidence" value="ECO:0007669"/>
    <property type="project" value="UniProtKB-SubCell"/>
</dbReference>
<dbReference type="GO" id="GO:0004801">
    <property type="term" value="F:transaldolase activity"/>
    <property type="evidence" value="ECO:0000250"/>
    <property type="project" value="UniProtKB"/>
</dbReference>
<dbReference type="GO" id="GO:0005975">
    <property type="term" value="P:carbohydrate metabolic process"/>
    <property type="evidence" value="ECO:0007669"/>
    <property type="project" value="InterPro"/>
</dbReference>
<dbReference type="GO" id="GO:0006098">
    <property type="term" value="P:pentose-phosphate shunt"/>
    <property type="evidence" value="ECO:0007669"/>
    <property type="project" value="UniProtKB-UniRule"/>
</dbReference>
<dbReference type="CDD" id="cd00957">
    <property type="entry name" value="Transaldolase_TalAB"/>
    <property type="match status" value="1"/>
</dbReference>
<dbReference type="FunFam" id="3.20.20.70:FF:000131">
    <property type="entry name" value="Transaldolase"/>
    <property type="match status" value="1"/>
</dbReference>
<dbReference type="Gene3D" id="3.20.20.70">
    <property type="entry name" value="Aldolase class I"/>
    <property type="match status" value="1"/>
</dbReference>
<dbReference type="HAMAP" id="MF_00492">
    <property type="entry name" value="Transaldolase_1"/>
    <property type="match status" value="1"/>
</dbReference>
<dbReference type="InterPro" id="IPR013785">
    <property type="entry name" value="Aldolase_TIM"/>
</dbReference>
<dbReference type="InterPro" id="IPR001585">
    <property type="entry name" value="TAL/FSA"/>
</dbReference>
<dbReference type="InterPro" id="IPR004730">
    <property type="entry name" value="Transaldolase_1"/>
</dbReference>
<dbReference type="InterPro" id="IPR018225">
    <property type="entry name" value="Transaldolase_AS"/>
</dbReference>
<dbReference type="NCBIfam" id="TIGR00874">
    <property type="entry name" value="talAB"/>
    <property type="match status" value="1"/>
</dbReference>
<dbReference type="PANTHER" id="PTHR10683">
    <property type="entry name" value="TRANSALDOLASE"/>
    <property type="match status" value="1"/>
</dbReference>
<dbReference type="PANTHER" id="PTHR10683:SF18">
    <property type="entry name" value="TRANSALDOLASE"/>
    <property type="match status" value="1"/>
</dbReference>
<dbReference type="Pfam" id="PF00923">
    <property type="entry name" value="TAL_FSA"/>
    <property type="match status" value="1"/>
</dbReference>
<dbReference type="SUPFAM" id="SSF51569">
    <property type="entry name" value="Aldolase"/>
    <property type="match status" value="1"/>
</dbReference>
<dbReference type="PROSITE" id="PS01054">
    <property type="entry name" value="TRANSALDOLASE_1"/>
    <property type="match status" value="1"/>
</dbReference>
<dbReference type="PROSITE" id="PS00958">
    <property type="entry name" value="TRANSALDOLASE_2"/>
    <property type="match status" value="1"/>
</dbReference>
<proteinExistence type="inferred from homology"/>
<reference key="1">
    <citation type="journal article" date="2003" name="Nature">
        <title>Genome divergence in two Prochlorococcus ecotypes reflects oceanic niche differentiation.</title>
        <authorList>
            <person name="Rocap G."/>
            <person name="Larimer F.W."/>
            <person name="Lamerdin J.E."/>
            <person name="Malfatti S."/>
            <person name="Chain P."/>
            <person name="Ahlgren N.A."/>
            <person name="Arellano A."/>
            <person name="Coleman M."/>
            <person name="Hauser L."/>
            <person name="Hess W.R."/>
            <person name="Johnson Z.I."/>
            <person name="Land M.L."/>
            <person name="Lindell D."/>
            <person name="Post A.F."/>
            <person name="Regala W."/>
            <person name="Shah M."/>
            <person name="Shaw S.L."/>
            <person name="Steglich C."/>
            <person name="Sullivan M.B."/>
            <person name="Ting C.S."/>
            <person name="Tolonen A."/>
            <person name="Webb E.A."/>
            <person name="Zinser E.R."/>
            <person name="Chisholm S.W."/>
        </authorList>
    </citation>
    <scope>NUCLEOTIDE SEQUENCE [LARGE SCALE GENOMIC DNA]</scope>
    <source>
        <strain>CCMP1986 / NIES-2087 / MED4</strain>
    </source>
</reference>
<sequence length="333" mass="37182">MKSILEQLSSITVVVADTGDLDAIKKFQPRDATTNPSLILAAAKNPDYIKLIDQALESSRKSLPAGFSESELIKETIDQVSVFFGKEILNLISGRVSTEVDARLSFDTEATVTKARKLINHYKSFGINKERILIKIASTWEGIKAAEILEKEGIKCNLTLLFNFCQAVACANAKITLISPFVGRILDWHKAKTGKDNFAGCEDPGVISVTKIYNYFKEKGFKTEVMGASFRNIDEIKELAGCDLLTIAPKFLDELNREEGELIKKLDEDTQSQSSIDYKFDEKDFRLSMLEDQMASEKLSEGITGFSKAIEELEELLLKRLSEINNQKLISTT</sequence>